<organism>
    <name type="scientific">Candida glabrata (strain ATCC 2001 / BCRC 20586 / JCM 3761 / NBRC 0622 / NRRL Y-65 / CBS 138)</name>
    <name type="common">Yeast</name>
    <name type="synonym">Nakaseomyces glabratus</name>
    <dbReference type="NCBI Taxonomy" id="284593"/>
    <lineage>
        <taxon>Eukaryota</taxon>
        <taxon>Fungi</taxon>
        <taxon>Dikarya</taxon>
        <taxon>Ascomycota</taxon>
        <taxon>Saccharomycotina</taxon>
        <taxon>Saccharomycetes</taxon>
        <taxon>Saccharomycetales</taxon>
        <taxon>Saccharomycetaceae</taxon>
        <taxon>Nakaseomyces</taxon>
    </lineage>
</organism>
<sequence>MPLQLAKSLKLHNDKVWSIDFEPVRGLLATGSTDRAIKVLQLKNGKENLLDVLDDTVHKKAVRSVAWRPHSDLLAAGSFDSTISIWTQSDLDLEEGAKLEMELLAIIEGHENEVKGISWSQDGCLLATCSRDKSVWIWETDEAGEEYECISVLQEHSQDVKHVVWHTKHNLLASSSYDDTVRIWKDYDDDWECAAVLTGHEGTIWCSDFSKEEDPIRLCSGSDDSTVRVWKYIGDDEDDQQEWVCESTLPNAHRSQIYGVAWSPSGRIASVGADGVLAVYKEKQNDSEVSEWEISATYKAAHTVYEINTVKWVNIDGKEMLITAGDDGRVNLWNYQD</sequence>
<comment type="function">
    <text evidence="1">Essential component of the cytosolic iron-sulfur (Fe/S) protein assembly machinery. Required for the maturation of extramitochondrial Fe/S proteins.</text>
</comment>
<comment type="subunit">
    <text evidence="1">Interacts with NAR1.</text>
</comment>
<comment type="subcellular location">
    <subcellularLocation>
        <location evidence="1">Cytoplasm</location>
    </subcellularLocation>
    <subcellularLocation>
        <location evidence="1">Nucleus</location>
    </subcellularLocation>
    <text evidence="1">Preferentially localized to the nucleus.</text>
</comment>
<comment type="similarity">
    <text evidence="1">Belongs to the WD repeat CIA1 family.</text>
</comment>
<dbReference type="EMBL" id="CR380959">
    <property type="protein sequence ID" value="CAG62697.1"/>
    <property type="molecule type" value="Genomic_DNA"/>
</dbReference>
<dbReference type="RefSeq" id="XP_449721.1">
    <property type="nucleotide sequence ID" value="XM_449721.1"/>
</dbReference>
<dbReference type="SMR" id="Q6FJ73"/>
<dbReference type="FunCoup" id="Q6FJ73">
    <property type="interactions" value="84"/>
</dbReference>
<dbReference type="STRING" id="284593.Q6FJ73"/>
<dbReference type="EnsemblFungi" id="CAGL0M08646g-T">
    <property type="protein sequence ID" value="CAGL0M08646g-T-p1"/>
    <property type="gene ID" value="CAGL0M08646g"/>
</dbReference>
<dbReference type="KEGG" id="cgr:2891282"/>
<dbReference type="CGD" id="CAL0136897">
    <property type="gene designation" value="CAGL0M08646g"/>
</dbReference>
<dbReference type="VEuPathDB" id="FungiDB:B1J91_M08646g"/>
<dbReference type="VEuPathDB" id="FungiDB:CAGL0M08646g"/>
<dbReference type="eggNOG" id="KOG0645">
    <property type="taxonomic scope" value="Eukaryota"/>
</dbReference>
<dbReference type="HOGENOM" id="CLU_000288_57_8_1"/>
<dbReference type="InParanoid" id="Q6FJ73"/>
<dbReference type="OMA" id="MPILASC"/>
<dbReference type="Proteomes" id="UP000002428">
    <property type="component" value="Chromosome M"/>
</dbReference>
<dbReference type="GO" id="GO:0097361">
    <property type="term" value="C:cytosolic [4Fe-4S] assembly targeting complex"/>
    <property type="evidence" value="ECO:0007669"/>
    <property type="project" value="EnsemblFungi"/>
</dbReference>
<dbReference type="GO" id="GO:0005634">
    <property type="term" value="C:nucleus"/>
    <property type="evidence" value="ECO:0007669"/>
    <property type="project" value="UniProtKB-SubCell"/>
</dbReference>
<dbReference type="GO" id="GO:0016226">
    <property type="term" value="P:iron-sulfur cluster assembly"/>
    <property type="evidence" value="ECO:0007669"/>
    <property type="project" value="UniProtKB-UniRule"/>
</dbReference>
<dbReference type="GO" id="GO:0002098">
    <property type="term" value="P:tRNA wobble uridine modification"/>
    <property type="evidence" value="ECO:0007669"/>
    <property type="project" value="EnsemblFungi"/>
</dbReference>
<dbReference type="CDD" id="cd00200">
    <property type="entry name" value="WD40"/>
    <property type="match status" value="1"/>
</dbReference>
<dbReference type="FunFam" id="2.130.10.10:FF:000705">
    <property type="entry name" value="Probable cytosolic iron-sulfur protein assembly protein 1"/>
    <property type="match status" value="1"/>
</dbReference>
<dbReference type="Gene3D" id="2.130.10.10">
    <property type="entry name" value="YVTN repeat-like/Quinoprotein amine dehydrogenase"/>
    <property type="match status" value="1"/>
</dbReference>
<dbReference type="HAMAP" id="MF_03037">
    <property type="entry name" value="ciao1"/>
    <property type="match status" value="1"/>
</dbReference>
<dbReference type="InterPro" id="IPR028608">
    <property type="entry name" value="CIAO1/Cia1"/>
</dbReference>
<dbReference type="InterPro" id="IPR020472">
    <property type="entry name" value="G-protein_beta_WD-40_rep"/>
</dbReference>
<dbReference type="InterPro" id="IPR015943">
    <property type="entry name" value="WD40/YVTN_repeat-like_dom_sf"/>
</dbReference>
<dbReference type="InterPro" id="IPR036322">
    <property type="entry name" value="WD40_repeat_dom_sf"/>
</dbReference>
<dbReference type="InterPro" id="IPR001680">
    <property type="entry name" value="WD40_rpt"/>
</dbReference>
<dbReference type="PANTHER" id="PTHR19920:SF0">
    <property type="entry name" value="CYTOSOLIC IRON-SULFUR PROTEIN ASSEMBLY PROTEIN CIAO1-RELATED"/>
    <property type="match status" value="1"/>
</dbReference>
<dbReference type="PANTHER" id="PTHR19920">
    <property type="entry name" value="WD40 PROTEIN CIAO1"/>
    <property type="match status" value="1"/>
</dbReference>
<dbReference type="Pfam" id="PF00400">
    <property type="entry name" value="WD40"/>
    <property type="match status" value="7"/>
</dbReference>
<dbReference type="PRINTS" id="PR00320">
    <property type="entry name" value="GPROTEINBRPT"/>
</dbReference>
<dbReference type="SMART" id="SM00320">
    <property type="entry name" value="WD40"/>
    <property type="match status" value="7"/>
</dbReference>
<dbReference type="SUPFAM" id="SSF50978">
    <property type="entry name" value="WD40 repeat-like"/>
    <property type="match status" value="1"/>
</dbReference>
<dbReference type="PROSITE" id="PS00678">
    <property type="entry name" value="WD_REPEATS_1"/>
    <property type="match status" value="1"/>
</dbReference>
<dbReference type="PROSITE" id="PS50082">
    <property type="entry name" value="WD_REPEATS_2"/>
    <property type="match status" value="6"/>
</dbReference>
<dbReference type="PROSITE" id="PS50294">
    <property type="entry name" value="WD_REPEATS_REGION"/>
    <property type="match status" value="1"/>
</dbReference>
<keyword id="KW-0963">Cytoplasm</keyword>
<keyword id="KW-0539">Nucleus</keyword>
<keyword id="KW-1185">Reference proteome</keyword>
<keyword id="KW-0677">Repeat</keyword>
<keyword id="KW-0853">WD repeat</keyword>
<proteinExistence type="inferred from homology"/>
<protein>
    <recommendedName>
        <fullName evidence="1">Probable cytosolic iron-sulfur protein assembly protein 1</fullName>
    </recommendedName>
</protein>
<feature type="chain" id="PRO_0000382510" description="Probable cytosolic iron-sulfur protein assembly protein 1">
    <location>
        <begin position="1"/>
        <end position="337"/>
    </location>
</feature>
<feature type="repeat" description="WD 1">
    <location>
        <begin position="11"/>
        <end position="50"/>
    </location>
</feature>
<feature type="repeat" description="WD 2">
    <location>
        <begin position="57"/>
        <end position="96"/>
    </location>
</feature>
<feature type="repeat" description="WD 3">
    <location>
        <begin position="109"/>
        <end position="148"/>
    </location>
</feature>
<feature type="repeat" description="WD 4">
    <location>
        <begin position="155"/>
        <end position="194"/>
    </location>
</feature>
<feature type="repeat" description="WD 5">
    <location>
        <begin position="199"/>
        <end position="240"/>
    </location>
</feature>
<feature type="repeat" description="WD 6">
    <location>
        <begin position="252"/>
        <end position="290"/>
    </location>
</feature>
<feature type="repeat" description="WD 7">
    <location>
        <begin position="301"/>
        <end position="337"/>
    </location>
</feature>
<evidence type="ECO:0000255" key="1">
    <source>
        <dbReference type="HAMAP-Rule" id="MF_03037"/>
    </source>
</evidence>
<gene>
    <name evidence="1" type="primary">CIA1</name>
    <name type="ordered locus">CAGL0M08646g</name>
</gene>
<accession>Q6FJ73</accession>
<reference key="1">
    <citation type="journal article" date="2004" name="Nature">
        <title>Genome evolution in yeasts.</title>
        <authorList>
            <person name="Dujon B."/>
            <person name="Sherman D."/>
            <person name="Fischer G."/>
            <person name="Durrens P."/>
            <person name="Casaregola S."/>
            <person name="Lafontaine I."/>
            <person name="de Montigny J."/>
            <person name="Marck C."/>
            <person name="Neuveglise C."/>
            <person name="Talla E."/>
            <person name="Goffard N."/>
            <person name="Frangeul L."/>
            <person name="Aigle M."/>
            <person name="Anthouard V."/>
            <person name="Babour A."/>
            <person name="Barbe V."/>
            <person name="Barnay S."/>
            <person name="Blanchin S."/>
            <person name="Beckerich J.-M."/>
            <person name="Beyne E."/>
            <person name="Bleykasten C."/>
            <person name="Boisrame A."/>
            <person name="Boyer J."/>
            <person name="Cattolico L."/>
            <person name="Confanioleri F."/>
            <person name="de Daruvar A."/>
            <person name="Despons L."/>
            <person name="Fabre E."/>
            <person name="Fairhead C."/>
            <person name="Ferry-Dumazet H."/>
            <person name="Groppi A."/>
            <person name="Hantraye F."/>
            <person name="Hennequin C."/>
            <person name="Jauniaux N."/>
            <person name="Joyet P."/>
            <person name="Kachouri R."/>
            <person name="Kerrest A."/>
            <person name="Koszul R."/>
            <person name="Lemaire M."/>
            <person name="Lesur I."/>
            <person name="Ma L."/>
            <person name="Muller H."/>
            <person name="Nicaud J.-M."/>
            <person name="Nikolski M."/>
            <person name="Oztas S."/>
            <person name="Ozier-Kalogeropoulos O."/>
            <person name="Pellenz S."/>
            <person name="Potier S."/>
            <person name="Richard G.-F."/>
            <person name="Straub M.-L."/>
            <person name="Suleau A."/>
            <person name="Swennen D."/>
            <person name="Tekaia F."/>
            <person name="Wesolowski-Louvel M."/>
            <person name="Westhof E."/>
            <person name="Wirth B."/>
            <person name="Zeniou-Meyer M."/>
            <person name="Zivanovic Y."/>
            <person name="Bolotin-Fukuhara M."/>
            <person name="Thierry A."/>
            <person name="Bouchier C."/>
            <person name="Caudron B."/>
            <person name="Scarpelli C."/>
            <person name="Gaillardin C."/>
            <person name="Weissenbach J."/>
            <person name="Wincker P."/>
            <person name="Souciet J.-L."/>
        </authorList>
    </citation>
    <scope>NUCLEOTIDE SEQUENCE [LARGE SCALE GENOMIC DNA]</scope>
    <source>
        <strain>ATCC 2001 / BCRC 20586 / JCM 3761 / NBRC 0622 / NRRL Y-65 / CBS 138</strain>
    </source>
</reference>
<name>CIAO1_CANGA</name>